<name>YN41_SCHPO</name>
<feature type="chain" id="PRO_0000173448" description="Uncharacterized transporter C36.01c">
    <location>
        <begin position="1"/>
        <end position="580"/>
    </location>
</feature>
<feature type="transmembrane region" description="Helical" evidence="1">
    <location>
        <begin position="143"/>
        <end position="163"/>
    </location>
</feature>
<feature type="transmembrane region" description="Helical" evidence="1">
    <location>
        <begin position="177"/>
        <end position="197"/>
    </location>
</feature>
<feature type="transmembrane region" description="Helical" evidence="1">
    <location>
        <begin position="207"/>
        <end position="227"/>
    </location>
</feature>
<feature type="transmembrane region" description="Helical" evidence="1">
    <location>
        <begin position="235"/>
        <end position="255"/>
    </location>
</feature>
<feature type="transmembrane region" description="Helical" evidence="1">
    <location>
        <begin position="265"/>
        <end position="285"/>
    </location>
</feature>
<feature type="transmembrane region" description="Helical" evidence="1">
    <location>
        <begin position="295"/>
        <end position="315"/>
    </location>
</feature>
<feature type="transmembrane region" description="Helical" evidence="1">
    <location>
        <begin position="370"/>
        <end position="390"/>
    </location>
</feature>
<feature type="transmembrane region" description="Helical" evidence="1">
    <location>
        <begin position="405"/>
        <end position="425"/>
    </location>
</feature>
<feature type="transmembrane region" description="Helical" evidence="1">
    <location>
        <begin position="450"/>
        <end position="470"/>
    </location>
</feature>
<feature type="transmembrane region" description="Helical" evidence="1">
    <location>
        <begin position="476"/>
        <end position="496"/>
    </location>
</feature>
<feature type="transmembrane region" description="Helical" evidence="1">
    <location>
        <begin position="511"/>
        <end position="533"/>
    </location>
</feature>
<feature type="transmembrane region" description="Helical" evidence="1">
    <location>
        <begin position="546"/>
        <end position="566"/>
    </location>
</feature>
<feature type="region of interest" description="Disordered" evidence="2">
    <location>
        <begin position="1"/>
        <end position="45"/>
    </location>
</feature>
<feature type="compositionally biased region" description="Polar residues" evidence="2">
    <location>
        <begin position="1"/>
        <end position="44"/>
    </location>
</feature>
<feature type="modified residue" description="Phosphoserine" evidence="4">
    <location>
        <position position="99"/>
    </location>
</feature>
<protein>
    <recommendedName>
        <fullName>Uncharacterized transporter C36.01c</fullName>
    </recommendedName>
</protein>
<comment type="subcellular location">
    <subcellularLocation>
        <location evidence="3">Membrane</location>
        <topology evidence="3">Multi-pass membrane protein</topology>
    </subcellularLocation>
</comment>
<comment type="similarity">
    <text evidence="5">Belongs to the major facilitator superfamily. CAR1 family.</text>
</comment>
<reference key="1">
    <citation type="journal article" date="2002" name="Nature">
        <title>The genome sequence of Schizosaccharomyces pombe.</title>
        <authorList>
            <person name="Wood V."/>
            <person name="Gwilliam R."/>
            <person name="Rajandream M.A."/>
            <person name="Lyne M.H."/>
            <person name="Lyne R."/>
            <person name="Stewart A."/>
            <person name="Sgouros J.G."/>
            <person name="Peat N."/>
            <person name="Hayles J."/>
            <person name="Baker S.G."/>
            <person name="Basham D."/>
            <person name="Bowman S."/>
            <person name="Brooks K."/>
            <person name="Brown D."/>
            <person name="Brown S."/>
            <person name="Chillingworth T."/>
            <person name="Churcher C.M."/>
            <person name="Collins M."/>
            <person name="Connor R."/>
            <person name="Cronin A."/>
            <person name="Davis P."/>
            <person name="Feltwell T."/>
            <person name="Fraser A."/>
            <person name="Gentles S."/>
            <person name="Goble A."/>
            <person name="Hamlin N."/>
            <person name="Harris D.E."/>
            <person name="Hidalgo J."/>
            <person name="Hodgson G."/>
            <person name="Holroyd S."/>
            <person name="Hornsby T."/>
            <person name="Howarth S."/>
            <person name="Huckle E.J."/>
            <person name="Hunt S."/>
            <person name="Jagels K."/>
            <person name="James K.D."/>
            <person name="Jones L."/>
            <person name="Jones M."/>
            <person name="Leather S."/>
            <person name="McDonald S."/>
            <person name="McLean J."/>
            <person name="Mooney P."/>
            <person name="Moule S."/>
            <person name="Mungall K.L."/>
            <person name="Murphy L.D."/>
            <person name="Niblett D."/>
            <person name="Odell C."/>
            <person name="Oliver K."/>
            <person name="O'Neil S."/>
            <person name="Pearson D."/>
            <person name="Quail M.A."/>
            <person name="Rabbinowitsch E."/>
            <person name="Rutherford K.M."/>
            <person name="Rutter S."/>
            <person name="Saunders D."/>
            <person name="Seeger K."/>
            <person name="Sharp S."/>
            <person name="Skelton J."/>
            <person name="Simmonds M.N."/>
            <person name="Squares R."/>
            <person name="Squares S."/>
            <person name="Stevens K."/>
            <person name="Taylor K."/>
            <person name="Taylor R.G."/>
            <person name="Tivey A."/>
            <person name="Walsh S.V."/>
            <person name="Warren T."/>
            <person name="Whitehead S."/>
            <person name="Woodward J.R."/>
            <person name="Volckaert G."/>
            <person name="Aert R."/>
            <person name="Robben J."/>
            <person name="Grymonprez B."/>
            <person name="Weltjens I."/>
            <person name="Vanstreels E."/>
            <person name="Rieger M."/>
            <person name="Schaefer M."/>
            <person name="Mueller-Auer S."/>
            <person name="Gabel C."/>
            <person name="Fuchs M."/>
            <person name="Duesterhoeft A."/>
            <person name="Fritzc C."/>
            <person name="Holzer E."/>
            <person name="Moestl D."/>
            <person name="Hilbert H."/>
            <person name="Borzym K."/>
            <person name="Langer I."/>
            <person name="Beck A."/>
            <person name="Lehrach H."/>
            <person name="Reinhardt R."/>
            <person name="Pohl T.M."/>
            <person name="Eger P."/>
            <person name="Zimmermann W."/>
            <person name="Wedler H."/>
            <person name="Wambutt R."/>
            <person name="Purnelle B."/>
            <person name="Goffeau A."/>
            <person name="Cadieu E."/>
            <person name="Dreano S."/>
            <person name="Gloux S."/>
            <person name="Lelaure V."/>
            <person name="Mottier S."/>
            <person name="Galibert F."/>
            <person name="Aves S.J."/>
            <person name="Xiang Z."/>
            <person name="Hunt C."/>
            <person name="Moore K."/>
            <person name="Hurst S.M."/>
            <person name="Lucas M."/>
            <person name="Rochet M."/>
            <person name="Gaillardin C."/>
            <person name="Tallada V.A."/>
            <person name="Garzon A."/>
            <person name="Thode G."/>
            <person name="Daga R.R."/>
            <person name="Cruzado L."/>
            <person name="Jimenez J."/>
            <person name="Sanchez M."/>
            <person name="del Rey F."/>
            <person name="Benito J."/>
            <person name="Dominguez A."/>
            <person name="Revuelta J.L."/>
            <person name="Moreno S."/>
            <person name="Armstrong J."/>
            <person name="Forsburg S.L."/>
            <person name="Cerutti L."/>
            <person name="Lowe T."/>
            <person name="McCombie W.R."/>
            <person name="Paulsen I."/>
            <person name="Potashkin J."/>
            <person name="Shpakovski G.V."/>
            <person name="Ussery D."/>
            <person name="Barrell B.G."/>
            <person name="Nurse P."/>
        </authorList>
    </citation>
    <scope>NUCLEOTIDE SEQUENCE [LARGE SCALE GENOMIC DNA]</scope>
    <source>
        <strain>972 / ATCC 24843</strain>
    </source>
</reference>
<reference key="2">
    <citation type="journal article" date="2000" name="Genes Cells">
        <title>Large-scale screening of intracellular protein localization in living fission yeast cells by the use of a GFP-fusion genomic DNA library.</title>
        <authorList>
            <person name="Ding D.-Q."/>
            <person name="Tomita Y."/>
            <person name="Yamamoto A."/>
            <person name="Chikashige Y."/>
            <person name="Haraguchi T."/>
            <person name="Hiraoka Y."/>
        </authorList>
    </citation>
    <scope>NUCLEOTIDE SEQUENCE [LARGE SCALE GENOMIC DNA] OF 241-344</scope>
    <scope>SUBCELLULAR LOCATION</scope>
    <source>
        <strain>ATCC 38364 / 968</strain>
    </source>
</reference>
<reference key="3">
    <citation type="journal article" date="2008" name="J. Proteome Res.">
        <title>Phosphoproteome analysis of fission yeast.</title>
        <authorList>
            <person name="Wilson-Grady J.T."/>
            <person name="Villen J."/>
            <person name="Gygi S.P."/>
        </authorList>
    </citation>
    <scope>PHOSPHORYLATION [LARGE SCALE ANALYSIS] AT SER-99</scope>
    <scope>IDENTIFICATION BY MASS SPECTROMETRY</scope>
</reference>
<accession>O59698</accession>
<accession>Q9UU38</accession>
<keyword id="KW-0472">Membrane</keyword>
<keyword id="KW-0597">Phosphoprotein</keyword>
<keyword id="KW-1185">Reference proteome</keyword>
<keyword id="KW-0812">Transmembrane</keyword>
<keyword id="KW-1133">Transmembrane helix</keyword>
<keyword id="KW-0813">Transport</keyword>
<organism>
    <name type="scientific">Schizosaccharomyces pombe (strain 972 / ATCC 24843)</name>
    <name type="common">Fission yeast</name>
    <dbReference type="NCBI Taxonomy" id="284812"/>
    <lineage>
        <taxon>Eukaryota</taxon>
        <taxon>Fungi</taxon>
        <taxon>Dikarya</taxon>
        <taxon>Ascomycota</taxon>
        <taxon>Taphrinomycotina</taxon>
        <taxon>Schizosaccharomycetes</taxon>
        <taxon>Schizosaccharomycetales</taxon>
        <taxon>Schizosaccharomycetaceae</taxon>
        <taxon>Schizosaccharomyces</taxon>
    </lineage>
</organism>
<evidence type="ECO:0000255" key="1"/>
<evidence type="ECO:0000256" key="2">
    <source>
        <dbReference type="SAM" id="MobiDB-lite"/>
    </source>
</evidence>
<evidence type="ECO:0000269" key="3">
    <source>
    </source>
</evidence>
<evidence type="ECO:0000269" key="4">
    <source>
    </source>
</evidence>
<evidence type="ECO:0000305" key="5"/>
<gene>
    <name type="ORF">SPBC36.01c</name>
</gene>
<dbReference type="EMBL" id="CU329671">
    <property type="protein sequence ID" value="CAA19049.1"/>
    <property type="molecule type" value="Genomic_DNA"/>
</dbReference>
<dbReference type="EMBL" id="AB027835">
    <property type="protein sequence ID" value="BAA87139.1"/>
    <property type="molecule type" value="Genomic_DNA"/>
</dbReference>
<dbReference type="PIR" id="T40296">
    <property type="entry name" value="T40296"/>
</dbReference>
<dbReference type="RefSeq" id="NP_595329.1">
    <property type="nucleotide sequence ID" value="NM_001021237.2"/>
</dbReference>
<dbReference type="BioGRID" id="277450">
    <property type="interactions" value="2"/>
</dbReference>
<dbReference type="FunCoup" id="O59698">
    <property type="interactions" value="131"/>
</dbReference>
<dbReference type="iPTMnet" id="O59698"/>
<dbReference type="PaxDb" id="4896-SPBC36.01c.1"/>
<dbReference type="EnsemblFungi" id="SPBC36.01c.1">
    <property type="protein sequence ID" value="SPBC36.01c.1:pep"/>
    <property type="gene ID" value="SPBC36.01c"/>
</dbReference>
<dbReference type="KEGG" id="spo:2540934"/>
<dbReference type="PomBase" id="SPBC36.01c"/>
<dbReference type="VEuPathDB" id="FungiDB:SPBC36.01c"/>
<dbReference type="eggNOG" id="KOG0255">
    <property type="taxonomic scope" value="Eukaryota"/>
</dbReference>
<dbReference type="HOGENOM" id="CLU_008455_11_6_1"/>
<dbReference type="InParanoid" id="O59698"/>
<dbReference type="OMA" id="AQNWPLR"/>
<dbReference type="PhylomeDB" id="O59698"/>
<dbReference type="PRO" id="PR:O59698"/>
<dbReference type="Proteomes" id="UP000002485">
    <property type="component" value="Chromosome II"/>
</dbReference>
<dbReference type="GO" id="GO:0005886">
    <property type="term" value="C:plasma membrane"/>
    <property type="evidence" value="ECO:0000266"/>
    <property type="project" value="PomBase"/>
</dbReference>
<dbReference type="GO" id="GO:0015606">
    <property type="term" value="F:spermidine transmembrane transporter activity"/>
    <property type="evidence" value="ECO:0000266"/>
    <property type="project" value="PomBase"/>
</dbReference>
<dbReference type="GO" id="GO:0000297">
    <property type="term" value="F:spermine transmembrane transporter activity"/>
    <property type="evidence" value="ECO:0000266"/>
    <property type="project" value="PomBase"/>
</dbReference>
<dbReference type="GO" id="GO:0022857">
    <property type="term" value="F:transmembrane transporter activity"/>
    <property type="evidence" value="ECO:0000318"/>
    <property type="project" value="GO_Central"/>
</dbReference>
<dbReference type="GO" id="GO:1903711">
    <property type="term" value="P:spermidine transmembrane transport"/>
    <property type="evidence" value="ECO:0000305"/>
    <property type="project" value="PomBase"/>
</dbReference>
<dbReference type="GO" id="GO:1903710">
    <property type="term" value="P:spermine transmembrane transport"/>
    <property type="evidence" value="ECO:0000305"/>
    <property type="project" value="PomBase"/>
</dbReference>
<dbReference type="GO" id="GO:0055085">
    <property type="term" value="P:transmembrane transport"/>
    <property type="evidence" value="ECO:0000318"/>
    <property type="project" value="GO_Central"/>
</dbReference>
<dbReference type="CDD" id="cd17323">
    <property type="entry name" value="MFS_Tpo1_MDR_like"/>
    <property type="match status" value="1"/>
</dbReference>
<dbReference type="FunFam" id="1.20.1250.20:FF:000011">
    <property type="entry name" value="MFS multidrug transporter, putative"/>
    <property type="match status" value="1"/>
</dbReference>
<dbReference type="Gene3D" id="1.20.1250.20">
    <property type="entry name" value="MFS general substrate transporter like domains"/>
    <property type="match status" value="1"/>
</dbReference>
<dbReference type="InterPro" id="IPR011701">
    <property type="entry name" value="MFS"/>
</dbReference>
<dbReference type="InterPro" id="IPR020846">
    <property type="entry name" value="MFS_dom"/>
</dbReference>
<dbReference type="InterPro" id="IPR036259">
    <property type="entry name" value="MFS_trans_sf"/>
</dbReference>
<dbReference type="PANTHER" id="PTHR23502">
    <property type="entry name" value="MAJOR FACILITATOR SUPERFAMILY"/>
    <property type="match status" value="1"/>
</dbReference>
<dbReference type="PANTHER" id="PTHR23502:SF31">
    <property type="entry name" value="POLYAMINE TRANSPORTER 1"/>
    <property type="match status" value="1"/>
</dbReference>
<dbReference type="Pfam" id="PF07690">
    <property type="entry name" value="MFS_1"/>
    <property type="match status" value="1"/>
</dbReference>
<dbReference type="SUPFAM" id="SSF103473">
    <property type="entry name" value="MFS general substrate transporter"/>
    <property type="match status" value="1"/>
</dbReference>
<dbReference type="PROSITE" id="PS50850">
    <property type="entry name" value="MFS"/>
    <property type="match status" value="1"/>
</dbReference>
<proteinExistence type="evidence at protein level"/>
<sequence length="580" mass="64184">MSESSVNADTPKNTNDVLNGAYQSATTEPEGQYRSATDNPSLYQVPTHGSLYRNLSNSASAYYPANGNMNSREPANELSDISSLAEKGELEPPMAKLLSDPDFQGKQFPTVEAPELFIFELAPDSPSIALNWTFWRKMKTTSIYAYASLTIAWGSSVLSPASATLAKKYHIGMTTSLLNVSLFMLGYCLGPICWAPMSEITGRKTPLYIGLFLFSVFQIAVATAQDIQTIMICRFFGGYGACVPLCVVAAAFADMYPNRYRGTAITIFAAVIFVGPLVAPIVGGFLTKSYLGWRWTEYITSFMGFLSIILIYLFCEETYLKTITENKVQEYREITGNQLVHARSEEESLSARDIIMNYLLIPLKMLATEPIVFLVSLYCSFVYAIIYLLLEAYPVIFQEGRHFPLGVSALPYIGILVGVFIGCGINCLFEPWYFRQVIKAGNKPAPEARLPPMMIGSFLFPAGIFWLAWSGYYTYVHWIVPTLSGLLTGAGILLIFLQCLNYLLDAYLFRAASVFAANVIMRSAVAGGFPLFAVQMFHNMGVGWAGSLLGFIATALIPMPFAFFFFGKKIRAKSKMTAQF</sequence>